<keyword id="KW-0217">Developmental protein</keyword>
<keyword id="KW-0221">Differentiation</keyword>
<keyword id="KW-0238">DNA-binding</keyword>
<keyword id="KW-0524">Neurogenesis</keyword>
<keyword id="KW-0539">Nucleus</keyword>
<keyword id="KW-1185">Reference proteome</keyword>
<keyword id="KW-0677">Repeat</keyword>
<keyword id="KW-0804">Transcription</keyword>
<keyword id="KW-0805">Transcription regulation</keyword>
<dbReference type="EMBL" id="DQ977329">
    <property type="protein sequence ID" value="ABM91934.1"/>
    <property type="molecule type" value="Genomic_DNA"/>
</dbReference>
<dbReference type="RefSeq" id="NP_001074957.1">
    <property type="nucleotide sequence ID" value="NM_001081488.1"/>
</dbReference>
<dbReference type="RefSeq" id="XP_009449955.1">
    <property type="nucleotide sequence ID" value="XM_009451680.5"/>
</dbReference>
<dbReference type="RefSeq" id="XP_054541501.1">
    <property type="nucleotide sequence ID" value="XM_054685526.2"/>
</dbReference>
<dbReference type="SMR" id="A2T6X9"/>
<dbReference type="FunCoup" id="A2T6X9">
    <property type="interactions" value="296"/>
</dbReference>
<dbReference type="STRING" id="9598.ENSPTRP00000082869"/>
<dbReference type="PaxDb" id="9598-ENSPTRP00000031505"/>
<dbReference type="Ensembl" id="ENSPTRT00000034090.5">
    <property type="protein sequence ID" value="ENSPTRP00000031505.4"/>
    <property type="gene ID" value="ENSPTRG00000018447.6"/>
</dbReference>
<dbReference type="GeneID" id="472084"/>
<dbReference type="KEGG" id="ptr:472084"/>
<dbReference type="CTD" id="6492"/>
<dbReference type="VGNC" id="VGNC:7909">
    <property type="gene designation" value="SIM1"/>
</dbReference>
<dbReference type="eggNOG" id="KOG3559">
    <property type="taxonomic scope" value="Eukaryota"/>
</dbReference>
<dbReference type="GeneTree" id="ENSGT00940000156143"/>
<dbReference type="HOGENOM" id="CLU_010044_4_0_1"/>
<dbReference type="InParanoid" id="A2T6X9"/>
<dbReference type="OrthoDB" id="1972at9604"/>
<dbReference type="TreeFam" id="TF317772"/>
<dbReference type="Proteomes" id="UP000002277">
    <property type="component" value="Chromosome 6"/>
</dbReference>
<dbReference type="Bgee" id="ENSPTRG00000018447">
    <property type="expression patterns" value="Expressed in adult mammalian kidney and 4 other cell types or tissues"/>
</dbReference>
<dbReference type="GO" id="GO:0005634">
    <property type="term" value="C:nucleus"/>
    <property type="evidence" value="ECO:0007669"/>
    <property type="project" value="UniProtKB-SubCell"/>
</dbReference>
<dbReference type="GO" id="GO:0000981">
    <property type="term" value="F:DNA-binding transcription factor activity, RNA polymerase II-specific"/>
    <property type="evidence" value="ECO:0000318"/>
    <property type="project" value="GO_Central"/>
</dbReference>
<dbReference type="GO" id="GO:0046982">
    <property type="term" value="F:protein heterodimerization activity"/>
    <property type="evidence" value="ECO:0000250"/>
    <property type="project" value="UniProtKB"/>
</dbReference>
<dbReference type="GO" id="GO:0000977">
    <property type="term" value="F:RNA polymerase II transcription regulatory region sequence-specific DNA binding"/>
    <property type="evidence" value="ECO:0000318"/>
    <property type="project" value="GO_Central"/>
</dbReference>
<dbReference type="GO" id="GO:0030154">
    <property type="term" value="P:cell differentiation"/>
    <property type="evidence" value="ECO:0007669"/>
    <property type="project" value="UniProtKB-KW"/>
</dbReference>
<dbReference type="GO" id="GO:0007399">
    <property type="term" value="P:nervous system development"/>
    <property type="evidence" value="ECO:0007669"/>
    <property type="project" value="UniProtKB-KW"/>
</dbReference>
<dbReference type="GO" id="GO:0006357">
    <property type="term" value="P:regulation of transcription by RNA polymerase II"/>
    <property type="evidence" value="ECO:0000318"/>
    <property type="project" value="GO_Central"/>
</dbReference>
<dbReference type="CDD" id="cd19738">
    <property type="entry name" value="bHLH-PAS_SIM1"/>
    <property type="match status" value="1"/>
</dbReference>
<dbReference type="CDD" id="cd00130">
    <property type="entry name" value="PAS"/>
    <property type="match status" value="2"/>
</dbReference>
<dbReference type="FunFam" id="3.30.450.20:FF:000017">
    <property type="entry name" value="SIM bHLH transcription factor 2"/>
    <property type="match status" value="1"/>
</dbReference>
<dbReference type="FunFam" id="3.30.450.20:FF:000047">
    <property type="entry name" value="SIM bHLH transcription factor 2"/>
    <property type="match status" value="1"/>
</dbReference>
<dbReference type="FunFam" id="4.10.280.10:FF:000007">
    <property type="entry name" value="single-minded homolog 1 isoform X1"/>
    <property type="match status" value="1"/>
</dbReference>
<dbReference type="Gene3D" id="4.10.280.10">
    <property type="entry name" value="Helix-loop-helix DNA-binding domain"/>
    <property type="match status" value="1"/>
</dbReference>
<dbReference type="Gene3D" id="3.30.450.20">
    <property type="entry name" value="PAS domain"/>
    <property type="match status" value="2"/>
</dbReference>
<dbReference type="InterPro" id="IPR011598">
    <property type="entry name" value="bHLH_dom"/>
</dbReference>
<dbReference type="InterPro" id="IPR036638">
    <property type="entry name" value="HLH_DNA-bd_sf"/>
</dbReference>
<dbReference type="InterPro" id="IPR001610">
    <property type="entry name" value="PAC"/>
</dbReference>
<dbReference type="InterPro" id="IPR000014">
    <property type="entry name" value="PAS"/>
</dbReference>
<dbReference type="InterPro" id="IPR035965">
    <property type="entry name" value="PAS-like_dom_sf"/>
</dbReference>
<dbReference type="InterPro" id="IPR013767">
    <property type="entry name" value="PAS_fold"/>
</dbReference>
<dbReference type="InterPro" id="IPR013655">
    <property type="entry name" value="PAS_fold_3"/>
</dbReference>
<dbReference type="InterPro" id="IPR010578">
    <property type="entry name" value="SIM_C"/>
</dbReference>
<dbReference type="PANTHER" id="PTHR23043">
    <property type="entry name" value="HYPOXIA-INDUCIBLE FACTOR 1 ALPHA"/>
    <property type="match status" value="1"/>
</dbReference>
<dbReference type="PANTHER" id="PTHR23043:SF22">
    <property type="entry name" value="SINGLE-MINDED HOMOLOG 1"/>
    <property type="match status" value="1"/>
</dbReference>
<dbReference type="Pfam" id="PF23171">
    <property type="entry name" value="bHLH_HIF1A"/>
    <property type="match status" value="1"/>
</dbReference>
<dbReference type="Pfam" id="PF00989">
    <property type="entry name" value="PAS"/>
    <property type="match status" value="1"/>
</dbReference>
<dbReference type="Pfam" id="PF08447">
    <property type="entry name" value="PAS_3"/>
    <property type="match status" value="1"/>
</dbReference>
<dbReference type="Pfam" id="PF06621">
    <property type="entry name" value="SIM_C"/>
    <property type="match status" value="1"/>
</dbReference>
<dbReference type="SMART" id="SM00353">
    <property type="entry name" value="HLH"/>
    <property type="match status" value="1"/>
</dbReference>
<dbReference type="SMART" id="SM00086">
    <property type="entry name" value="PAC"/>
    <property type="match status" value="1"/>
</dbReference>
<dbReference type="SMART" id="SM00091">
    <property type="entry name" value="PAS"/>
    <property type="match status" value="2"/>
</dbReference>
<dbReference type="SUPFAM" id="SSF47459">
    <property type="entry name" value="HLH, helix-loop-helix DNA-binding domain"/>
    <property type="match status" value="1"/>
</dbReference>
<dbReference type="SUPFAM" id="SSF55785">
    <property type="entry name" value="PYP-like sensor domain (PAS domain)"/>
    <property type="match status" value="2"/>
</dbReference>
<dbReference type="PROSITE" id="PS50888">
    <property type="entry name" value="BHLH"/>
    <property type="match status" value="1"/>
</dbReference>
<dbReference type="PROSITE" id="PS50112">
    <property type="entry name" value="PAS"/>
    <property type="match status" value="2"/>
</dbReference>
<dbReference type="PROSITE" id="PS51302">
    <property type="entry name" value="SIM_C"/>
    <property type="match status" value="1"/>
</dbReference>
<sequence length="766" mass="85514">MKEKSKNAARTRREKENSEFYELAKLLPLPSAITSQLDKASIIRLTTSYLKMRVVFPEGLGEAWGHSSRTSPLDNVGRELGSHLLQTLDGFIFVVAPDGKIMYISETASVHLGLSQVELTGNSIYEYIHPADHDEMTAVLTAHQPYHSHFVQEYEIERSFFLRMKCVLAKRNAGLTCGGYKVIHCSGYLKIRQYSLDMSPFDGCYQNVGLVAVGHSLPPSAVTEIKLHSNMFMFRASLDMKLIFLDSRVAELTGYEPQDLIEKTLYHHVHGCDTFHLRCAHHLLLVKGQVTTKYYRFLAKHGGWVWVQSYATIVHNSRSSRPHCIVSVNYVLTDTEYKGLQLSLDQISASKPAFSYTSSSTPTMTDNRKGAKSRLSSSKSKSRTSPYPQYSGFHTERSESDHDSQWGGSPLTDTASPQLLDPADRPGSQHDASCAYRQFSDRSSLCYGFALDHSRLVEERHFHTQACEGGRCEAGRYFLGTPQAGREPWWGSRAALPLTKASPESREAYENSMPHIASVHRIHGRGHWDEDSVVSSPDPGSASESGDRYRTEQYQSSPHEPSKIETLIRATQQMIKEEENRLQLRKAPSDQLASINGAGKKHSLCFANYQQPPPTGEICHGSALANTSPCDHIQQREGKMLSPRENDYDNSPTALSRISSPNSDRISKSSLILAKDYLHSDISPHQTAGDHPTVSPNCFGSHRQYLDKHAYTLTGYALEHLYDSETIRNYSLGCNGSHFDVTSHLRMQPDPAQGHKGTSVIITNGS</sequence>
<organism>
    <name type="scientific">Pan troglodytes</name>
    <name type="common">Chimpanzee</name>
    <dbReference type="NCBI Taxonomy" id="9598"/>
    <lineage>
        <taxon>Eukaryota</taxon>
        <taxon>Metazoa</taxon>
        <taxon>Chordata</taxon>
        <taxon>Craniata</taxon>
        <taxon>Vertebrata</taxon>
        <taxon>Euteleostomi</taxon>
        <taxon>Mammalia</taxon>
        <taxon>Eutheria</taxon>
        <taxon>Euarchontoglires</taxon>
        <taxon>Primates</taxon>
        <taxon>Haplorrhini</taxon>
        <taxon>Catarrhini</taxon>
        <taxon>Hominidae</taxon>
        <taxon>Pan</taxon>
    </lineage>
</organism>
<name>SIM1_PANTR</name>
<proteinExistence type="inferred from homology"/>
<evidence type="ECO:0000250" key="1"/>
<evidence type="ECO:0000250" key="2">
    <source>
        <dbReference type="UniProtKB" id="Q61045"/>
    </source>
</evidence>
<evidence type="ECO:0000255" key="3">
    <source>
        <dbReference type="PROSITE-ProRule" id="PRU00140"/>
    </source>
</evidence>
<evidence type="ECO:0000255" key="4">
    <source>
        <dbReference type="PROSITE-ProRule" id="PRU00632"/>
    </source>
</evidence>
<evidence type="ECO:0000255" key="5">
    <source>
        <dbReference type="PROSITE-ProRule" id="PRU00981"/>
    </source>
</evidence>
<evidence type="ECO:0000256" key="6">
    <source>
        <dbReference type="SAM" id="MobiDB-lite"/>
    </source>
</evidence>
<accession>A2T6X9</accession>
<reference key="1">
    <citation type="submission" date="2006-08" db="EMBL/GenBank/DDBJ databases">
        <title>Positive selection in transcription factor genes on the human lineage.</title>
        <authorList>
            <person name="Nickel G.C."/>
            <person name="Tefft D.L."/>
            <person name="Trevarthen K."/>
            <person name="Funt J."/>
            <person name="Adams M.D."/>
        </authorList>
    </citation>
    <scope>NUCLEOTIDE SEQUENCE [GENOMIC DNA]</scope>
</reference>
<comment type="function">
    <text evidence="1">Transcriptional factor that may have pleiotropic effects during embryogenesis and in the adult.</text>
</comment>
<comment type="subunit">
    <text evidence="2">Efficient DNA binding requires dimerization with another bHLH protein. Heterodimer; forms a heterodimer with ARNT, ARNT2 (By similarity).</text>
</comment>
<comment type="subcellular location">
    <subcellularLocation>
        <location evidence="4 5">Nucleus</location>
    </subcellularLocation>
</comment>
<gene>
    <name type="primary">SIM1</name>
</gene>
<protein>
    <recommendedName>
        <fullName>Single-minded homolog 1</fullName>
    </recommendedName>
</protein>
<feature type="chain" id="PRO_0000285525" description="Single-minded homolog 1">
    <location>
        <begin position="1"/>
        <end position="766"/>
    </location>
</feature>
<feature type="domain" description="bHLH" evidence="5">
    <location>
        <begin position="1"/>
        <end position="53"/>
    </location>
</feature>
<feature type="domain" description="PAS 1" evidence="3">
    <location>
        <begin position="77"/>
        <end position="147"/>
    </location>
</feature>
<feature type="domain" description="PAS 2" evidence="3">
    <location>
        <begin position="218"/>
        <end position="288"/>
    </location>
</feature>
<feature type="domain" description="PAC">
    <location>
        <begin position="292"/>
        <end position="335"/>
    </location>
</feature>
<feature type="domain" description="Single-minded C-terminal" evidence="4">
    <location>
        <begin position="336"/>
        <end position="766"/>
    </location>
</feature>
<feature type="region of interest" description="Disordered" evidence="6">
    <location>
        <begin position="353"/>
        <end position="431"/>
    </location>
</feature>
<feature type="region of interest" description="Disordered" evidence="6">
    <location>
        <begin position="528"/>
        <end position="563"/>
    </location>
</feature>
<feature type="region of interest" description="Disordered" evidence="6">
    <location>
        <begin position="642"/>
        <end position="662"/>
    </location>
</feature>
<feature type="short sequence motif" description="Nuclear localization signal" evidence="1">
    <location>
        <begin position="368"/>
        <end position="387"/>
    </location>
</feature>
<feature type="compositionally biased region" description="Polar residues" evidence="6">
    <location>
        <begin position="353"/>
        <end position="365"/>
    </location>
</feature>
<feature type="compositionally biased region" description="Low complexity" evidence="6">
    <location>
        <begin position="373"/>
        <end position="385"/>
    </location>
</feature>
<feature type="compositionally biased region" description="Basic and acidic residues" evidence="6">
    <location>
        <begin position="394"/>
        <end position="404"/>
    </location>
</feature>
<feature type="compositionally biased region" description="Polar residues" evidence="6">
    <location>
        <begin position="649"/>
        <end position="662"/>
    </location>
</feature>